<name>EXTL1_MOUSE</name>
<organism>
    <name type="scientific">Mus musculus</name>
    <name type="common">Mouse</name>
    <dbReference type="NCBI Taxonomy" id="10090"/>
    <lineage>
        <taxon>Eukaryota</taxon>
        <taxon>Metazoa</taxon>
        <taxon>Chordata</taxon>
        <taxon>Craniata</taxon>
        <taxon>Vertebrata</taxon>
        <taxon>Euteleostomi</taxon>
        <taxon>Mammalia</taxon>
        <taxon>Eutheria</taxon>
        <taxon>Euarchontoglires</taxon>
        <taxon>Glires</taxon>
        <taxon>Rodentia</taxon>
        <taxon>Myomorpha</taxon>
        <taxon>Muroidea</taxon>
        <taxon>Muridae</taxon>
        <taxon>Murinae</taxon>
        <taxon>Mus</taxon>
        <taxon>Mus</taxon>
    </lineage>
</organism>
<protein>
    <recommendedName>
        <fullName>Exostosin-like 1</fullName>
        <ecNumber evidence="2">2.4.1.224</ecNumber>
    </recommendedName>
    <alternativeName>
        <fullName>Exostosin-L</fullName>
    </alternativeName>
    <alternativeName>
        <fullName>Glucuronosyl-N-acetylglucosaminyl-proteoglycan 4-alpha-N-acetylglucosaminyltransferase</fullName>
    </alternativeName>
    <alternativeName>
        <fullName>Multiple exostosis-like protein</fullName>
    </alternativeName>
</protein>
<keyword id="KW-1015">Disulfide bond</keyword>
<keyword id="KW-0256">Endoplasmic reticulum</keyword>
<keyword id="KW-0325">Glycoprotein</keyword>
<keyword id="KW-0328">Glycosyltransferase</keyword>
<keyword id="KW-0472">Membrane</keyword>
<keyword id="KW-1185">Reference proteome</keyword>
<keyword id="KW-0735">Signal-anchor</keyword>
<keyword id="KW-0808">Transferase</keyword>
<keyword id="KW-0812">Transmembrane</keyword>
<keyword id="KW-1133">Transmembrane helix</keyword>
<feature type="chain" id="PRO_0000149654" description="Exostosin-like 1">
    <location>
        <begin position="1"/>
        <end position="669"/>
    </location>
</feature>
<feature type="topological domain" description="Cytoplasmic" evidence="4">
    <location>
        <begin position="1"/>
        <end position="8"/>
    </location>
</feature>
<feature type="transmembrane region" description="Helical; Signal-anchor for type II membrane protein" evidence="4">
    <location>
        <begin position="9"/>
        <end position="29"/>
    </location>
</feature>
<feature type="topological domain" description="Lumenal" evidence="4">
    <location>
        <begin position="30"/>
        <end position="669"/>
    </location>
</feature>
<feature type="region of interest" description="Disordered" evidence="5">
    <location>
        <begin position="601"/>
        <end position="621"/>
    </location>
</feature>
<feature type="glycosylation site" description="N-linked (GlcNAc...) asparagine" evidence="4">
    <location>
        <position position="263"/>
    </location>
</feature>
<feature type="glycosylation site" description="N-linked (GlcNAc...) asparagine" evidence="4">
    <location>
        <position position="480"/>
    </location>
</feature>
<feature type="disulfide bond" evidence="3">
    <location>
        <begin position="577"/>
        <end position="627"/>
    </location>
</feature>
<feature type="sequence conflict" description="In Ref. 1; AAF61913." evidence="6" ref="1">
    <original>L</original>
    <variation>S</variation>
    <location>
        <position position="32"/>
    </location>
</feature>
<feature type="sequence conflict" description="In Ref. 1; AAF61913." evidence="6" ref="1">
    <original>L</original>
    <variation>I</variation>
    <location>
        <position position="190"/>
    </location>
</feature>
<feature type="sequence conflict" description="In Ref. 1; AAF61913." evidence="6" ref="1">
    <original>I</original>
    <variation>V</variation>
    <location>
        <position position="361"/>
    </location>
</feature>
<feature type="sequence conflict" description="In Ref. 1; AAF61913." evidence="6" ref="1">
    <original>L</original>
    <variation>P</variation>
    <location>
        <position position="450"/>
    </location>
</feature>
<feature type="sequence conflict" description="In Ref. 1; AAF61913." evidence="6" ref="1">
    <original>E</original>
    <variation>D</variation>
    <location>
        <position position="540"/>
    </location>
</feature>
<sequence length="669" mass="74079">MLWRRKSFWLALSAFWLLLVLLGVFPLRLAVLPGPLPGRSQGWPRWLDAAFLQSFSQSETNPEDVAQLPRVSRGSSCTWGACFDTSKCRGKVLKIFVHSPAGPTSEAQRRILDSLEGSRYSALSPADACLLLFLPSQDRRGACGPLPPNWNGGRNHLVLSLYPAPCTRLGQAMVAEASPSSDIFRPGFDLALPYLPEAHPLRGGAPGKLQQHSPQPGATLLAVAEEKGRWRITSTHASACLWDRHCEQDPGPQQTYPGETLPNATFCLIPGHRSATSCFLQALQAGCIPVLLSPRWELPFSEVIDWTKAAIIADERLPLQVLAALREMLPSRVLALRQQTQFLWTAYFSSVEKVIHTTLEIIQDRIWGASGHPSLMWNSPPGALLALPTFSTSLQDFPFYHLQLGSGPGSSFSAVIWVGASGESLLKLIQEVAGSRHCAQILILWNSEKLPPDRWPETAVPLTVIKGHRKVSNRFFPYSNISTNVILSLDAQSTLSTSEVDFAFVVWQSFPERMVGFLSGSHFWDEAQGGWGYRTGMTNEFSMVLTTAAFYHRYYHTLFTHSLPKALRTIADETPTCVDVLMNFLVATVTKLPPIKVPYGRQHPEAVPMDSGDPRPVPEPQPLDQDCINRLAAGFGHMPLVSSQVRLDPVLFKDPVSVQRKKYRSLEKP</sequence>
<proteinExistence type="evidence at transcript level"/>
<comment type="function">
    <text evidence="2">Glycosyltransferase required for the biosynthesis of heparan-sulfate (HS). Transfers N-acetyl-alpha-D-glucosamine to the nascent HS chain (GlcNAcT-II activity). Appears to lack GlcNAcT I and GlcAT-II activities.</text>
</comment>
<comment type="catalytic activity">
    <reaction evidence="2">
        <text>3-O-{[(1-&gt;4)-beta-D-GlcA-(1-&gt;4)-alpha-D-GlcNAc](n)-(1-&gt;4)-beta-D-GlcA-(1-&gt;3)-beta-D-Gal-(1-&gt;3)-beta-D-Gal-(1-&gt;4)-beta-D-Xyl}-L-seryl-[protein] + UDP-N-acetyl-alpha-D-glucosamine = 3-O-{alpha-D-GlcNAc-[(1-&gt;4)-beta-D-GlcA-(1-&gt;4)-alpha-D-GlcNAc](n)-(1-&gt;4)-beta-D-GlcA-(1-&gt;3)-beta-D-Gal-(1-&gt;3)-beta-D-Gal-(1-&gt;4)-beta-D-Xyl}-L-seryl-[protein] + UDP + H(+)</text>
        <dbReference type="Rhea" id="RHEA:16213"/>
        <dbReference type="Rhea" id="RHEA-COMP:12621"/>
        <dbReference type="Rhea" id="RHEA-COMP:12623"/>
        <dbReference type="ChEBI" id="CHEBI:15378"/>
        <dbReference type="ChEBI" id="CHEBI:57705"/>
        <dbReference type="ChEBI" id="CHEBI:58223"/>
        <dbReference type="ChEBI" id="CHEBI:132415"/>
        <dbReference type="ChEBI" id="CHEBI:132416"/>
        <dbReference type="EC" id="2.4.1.224"/>
    </reaction>
</comment>
<comment type="pathway">
    <text evidence="2">Protein modification; protein glycosylation.</text>
</comment>
<comment type="subcellular location">
    <subcellularLocation>
        <location evidence="1">Endoplasmic reticulum membrane</location>
        <topology evidence="1">Single-pass type II membrane protein</topology>
    </subcellularLocation>
</comment>
<comment type="similarity">
    <text evidence="6">Belongs to the glycosyltransferase 47 family.</text>
</comment>
<comment type="online information" name="Functional Glycomics Gateway - GTase">
    <link uri="http://www.functionalglycomics.org/glycomics/molecule/jsp/glycoEnzyme/viewGlycoEnzyme.jsp?gbpId=gt_mou_578"/>
    <text>EXTL1 (putative HS transferase) [GAG Enzyme]</text>
</comment>
<accession>Q9JKV7</accession>
<accession>E9QKA3</accession>
<reference key="1">
    <citation type="journal article" date="2000" name="Dev. Dyn.">
        <title>EXT genes are differentially expressed in bone and cartilage during mouse embryogenesis.</title>
        <authorList>
            <person name="Stickens D."/>
            <person name="Brown D."/>
            <person name="Evans G.A."/>
        </authorList>
    </citation>
    <scope>NUCLEOTIDE SEQUENCE [MRNA]</scope>
    <source>
        <tissue>Fetal brain</tissue>
    </source>
</reference>
<reference key="2">
    <citation type="journal article" date="2009" name="PLoS Biol.">
        <title>Lineage-specific biology revealed by a finished genome assembly of the mouse.</title>
        <authorList>
            <person name="Church D.M."/>
            <person name="Goodstadt L."/>
            <person name="Hillier L.W."/>
            <person name="Zody M.C."/>
            <person name="Goldstein S."/>
            <person name="She X."/>
            <person name="Bult C.J."/>
            <person name="Agarwala R."/>
            <person name="Cherry J.L."/>
            <person name="DiCuccio M."/>
            <person name="Hlavina W."/>
            <person name="Kapustin Y."/>
            <person name="Meric P."/>
            <person name="Maglott D."/>
            <person name="Birtle Z."/>
            <person name="Marques A.C."/>
            <person name="Graves T."/>
            <person name="Zhou S."/>
            <person name="Teague B."/>
            <person name="Potamousis K."/>
            <person name="Churas C."/>
            <person name="Place M."/>
            <person name="Herschleb J."/>
            <person name="Runnheim R."/>
            <person name="Forrest D."/>
            <person name="Amos-Landgraf J."/>
            <person name="Schwartz D.C."/>
            <person name="Cheng Z."/>
            <person name="Lindblad-Toh K."/>
            <person name="Eichler E.E."/>
            <person name="Ponting C.P."/>
        </authorList>
    </citation>
    <scope>NUCLEOTIDE SEQUENCE [LARGE SCALE GENOMIC DNA]</scope>
    <source>
        <strain>C57BL/6J</strain>
    </source>
</reference>
<evidence type="ECO:0000250" key="1"/>
<evidence type="ECO:0000250" key="2">
    <source>
        <dbReference type="UniProtKB" id="Q92935"/>
    </source>
</evidence>
<evidence type="ECO:0000250" key="3">
    <source>
        <dbReference type="UniProtKB" id="Q9ES89"/>
    </source>
</evidence>
<evidence type="ECO:0000255" key="4"/>
<evidence type="ECO:0000256" key="5">
    <source>
        <dbReference type="SAM" id="MobiDB-lite"/>
    </source>
</evidence>
<evidence type="ECO:0000305" key="6"/>
<dbReference type="EC" id="2.4.1.224" evidence="2"/>
<dbReference type="EMBL" id="AF224461">
    <property type="protein sequence ID" value="AAF61913.1"/>
    <property type="molecule type" value="mRNA"/>
</dbReference>
<dbReference type="EMBL" id="AL669982">
    <property type="status" value="NOT_ANNOTATED_CDS"/>
    <property type="molecule type" value="Genomic_DNA"/>
</dbReference>
<dbReference type="CCDS" id="CCDS18770.1"/>
<dbReference type="RefSeq" id="NP_062524.2">
    <property type="nucleotide sequence ID" value="NM_019578.2"/>
</dbReference>
<dbReference type="SMR" id="Q9JKV7"/>
<dbReference type="FunCoup" id="Q9JKV7">
    <property type="interactions" value="98"/>
</dbReference>
<dbReference type="STRING" id="10090.ENSMUSP00000030643"/>
<dbReference type="CAZy" id="GT47">
    <property type="family name" value="Glycosyltransferase Family 47"/>
</dbReference>
<dbReference type="CAZy" id="GT64">
    <property type="family name" value="Glycosyltransferase Family 64"/>
</dbReference>
<dbReference type="GlyCosmos" id="Q9JKV7">
    <property type="glycosylation" value="2 sites, No reported glycans"/>
</dbReference>
<dbReference type="GlyGen" id="Q9JKV7">
    <property type="glycosylation" value="4 sites, 1 O-linked glycan (1 site)"/>
</dbReference>
<dbReference type="PhosphoSitePlus" id="Q9JKV7"/>
<dbReference type="PaxDb" id="10090-ENSMUSP00000030643"/>
<dbReference type="Antibodypedia" id="30538">
    <property type="antibodies" value="121 antibodies from 24 providers"/>
</dbReference>
<dbReference type="DNASU" id="56219"/>
<dbReference type="Ensembl" id="ENSMUST00000030643.3">
    <property type="protein sequence ID" value="ENSMUSP00000030643.3"/>
    <property type="gene ID" value="ENSMUSG00000028838.12"/>
</dbReference>
<dbReference type="GeneID" id="56219"/>
<dbReference type="KEGG" id="mmu:56219"/>
<dbReference type="UCSC" id="uc012dmu.1">
    <property type="organism name" value="mouse"/>
</dbReference>
<dbReference type="AGR" id="MGI:1888742"/>
<dbReference type="CTD" id="2134"/>
<dbReference type="MGI" id="MGI:1888742">
    <property type="gene designation" value="Extl1"/>
</dbReference>
<dbReference type="VEuPathDB" id="HostDB:ENSMUSG00000028838"/>
<dbReference type="eggNOG" id="KOG1021">
    <property type="taxonomic scope" value="Eukaryota"/>
</dbReference>
<dbReference type="GeneTree" id="ENSGT00940000161960"/>
<dbReference type="HOGENOM" id="CLU_013906_4_0_1"/>
<dbReference type="InParanoid" id="Q9JKV7"/>
<dbReference type="OMA" id="QWNGGKN"/>
<dbReference type="OrthoDB" id="5954868at2759"/>
<dbReference type="PhylomeDB" id="Q9JKV7"/>
<dbReference type="TreeFam" id="TF314231"/>
<dbReference type="UniPathway" id="UPA00378"/>
<dbReference type="BioGRID-ORCS" id="56219">
    <property type="hits" value="3 hits in 77 CRISPR screens"/>
</dbReference>
<dbReference type="ChiTaRS" id="Extl1">
    <property type="organism name" value="mouse"/>
</dbReference>
<dbReference type="PRO" id="PR:Q9JKV7"/>
<dbReference type="Proteomes" id="UP000000589">
    <property type="component" value="Chromosome 4"/>
</dbReference>
<dbReference type="RNAct" id="Q9JKV7">
    <property type="molecule type" value="protein"/>
</dbReference>
<dbReference type="Bgee" id="ENSMUSG00000028838">
    <property type="expression patterns" value="Expressed in hindlimb stylopod muscle and 169 other cell types or tissues"/>
</dbReference>
<dbReference type="GO" id="GO:0005789">
    <property type="term" value="C:endoplasmic reticulum membrane"/>
    <property type="evidence" value="ECO:0007669"/>
    <property type="project" value="UniProtKB-SubCell"/>
</dbReference>
<dbReference type="GO" id="GO:0050508">
    <property type="term" value="F:glucuronosyl-N-acetylglucosaminyl-proteoglycan 4-alpha-N-acetylglucosaminyltransferase activity"/>
    <property type="evidence" value="ECO:0000250"/>
    <property type="project" value="UniProtKB"/>
</dbReference>
<dbReference type="GO" id="GO:0015012">
    <property type="term" value="P:heparan sulfate proteoglycan biosynthetic process"/>
    <property type="evidence" value="ECO:0000250"/>
    <property type="project" value="UniProtKB"/>
</dbReference>
<dbReference type="GO" id="GO:0006486">
    <property type="term" value="P:protein glycosylation"/>
    <property type="evidence" value="ECO:0007669"/>
    <property type="project" value="UniProtKB-UniPathway"/>
</dbReference>
<dbReference type="FunFam" id="3.90.550.10:FF:000109">
    <property type="entry name" value="Exostosin like glycosyltransferase 1"/>
    <property type="match status" value="1"/>
</dbReference>
<dbReference type="Gene3D" id="3.90.550.10">
    <property type="entry name" value="Spore Coat Polysaccharide Biosynthesis Protein SpsA, Chain A"/>
    <property type="match status" value="1"/>
</dbReference>
<dbReference type="InterPro" id="IPR004263">
    <property type="entry name" value="Exostosin"/>
</dbReference>
<dbReference type="InterPro" id="IPR040911">
    <property type="entry name" value="Exostosin_GT47"/>
</dbReference>
<dbReference type="InterPro" id="IPR015338">
    <property type="entry name" value="GT64_dom"/>
</dbReference>
<dbReference type="InterPro" id="IPR029044">
    <property type="entry name" value="Nucleotide-diphossugar_trans"/>
</dbReference>
<dbReference type="PANTHER" id="PTHR48261">
    <property type="entry name" value="ACETYLGLUCOSAMINYLTRANSFERASE"/>
    <property type="match status" value="1"/>
</dbReference>
<dbReference type="PANTHER" id="PTHR48261:SF3">
    <property type="entry name" value="EXOSTOSIN GLYCOSYLTRANSFERASE 1"/>
    <property type="match status" value="1"/>
</dbReference>
<dbReference type="Pfam" id="PF03016">
    <property type="entry name" value="Exostosin_GT47"/>
    <property type="match status" value="1"/>
</dbReference>
<dbReference type="Pfam" id="PF09258">
    <property type="entry name" value="Glyco_transf_64"/>
    <property type="match status" value="1"/>
</dbReference>
<dbReference type="SUPFAM" id="SSF53448">
    <property type="entry name" value="Nucleotide-diphospho-sugar transferases"/>
    <property type="match status" value="1"/>
</dbReference>
<gene>
    <name type="primary">Extl1</name>
</gene>